<name>FAR1_LUCCU</name>
<dbReference type="GO" id="GO:0005576">
    <property type="term" value="C:extracellular region"/>
    <property type="evidence" value="ECO:0007669"/>
    <property type="project" value="UniProtKB-SubCell"/>
</dbReference>
<dbReference type="GO" id="GO:0007218">
    <property type="term" value="P:neuropeptide signaling pathway"/>
    <property type="evidence" value="ECO:0007669"/>
    <property type="project" value="UniProtKB-KW"/>
</dbReference>
<evidence type="ECO:0000255" key="1"/>
<evidence type="ECO:0000269" key="2">
    <source>
    </source>
</evidence>
<evidence type="ECO:0000303" key="3">
    <source>
    </source>
</evidence>
<evidence type="ECO:0000305" key="4"/>
<reference evidence="4" key="1">
    <citation type="journal article" date="2009" name="Gen. Comp. Endocrinol.">
        <title>Extended FMRFamides in dipteran insects: conservative expression in the neuroendocrine system is accompanied by rapid sequence evolution.</title>
        <authorList>
            <person name="Rahman M.M."/>
            <person name="Fromm B."/>
            <person name="Neupert S."/>
            <person name="Kreusch S."/>
            <person name="Predel R."/>
        </authorList>
    </citation>
    <scope>PROTEIN SEQUENCE</scope>
    <scope>TISSUE SPECIFICITY</scope>
    <scope>MASS SPECTROMETRY</scope>
    <scope>AMIDATION AT PHE-9</scope>
    <source>
        <strain evidence="2">Bangladesh</strain>
        <strain evidence="2">Goondiwindi</strain>
        <tissue evidence="2">Dorsal ganglionic sheath</tissue>
    </source>
</reference>
<sequence>SVQDNFIRF</sequence>
<accession>P85448</accession>
<keyword id="KW-0027">Amidation</keyword>
<keyword id="KW-0903">Direct protein sequencing</keyword>
<keyword id="KW-0527">Neuropeptide</keyword>
<keyword id="KW-0964">Secreted</keyword>
<organism>
    <name type="scientific">Lucilia cuprina</name>
    <name type="common">Green bottle fly</name>
    <name type="synonym">Australian sheep blowfly</name>
    <dbReference type="NCBI Taxonomy" id="7375"/>
    <lineage>
        <taxon>Eukaryota</taxon>
        <taxon>Metazoa</taxon>
        <taxon>Ecdysozoa</taxon>
        <taxon>Arthropoda</taxon>
        <taxon>Hexapoda</taxon>
        <taxon>Insecta</taxon>
        <taxon>Pterygota</taxon>
        <taxon>Neoptera</taxon>
        <taxon>Endopterygota</taxon>
        <taxon>Diptera</taxon>
        <taxon>Brachycera</taxon>
        <taxon>Muscomorpha</taxon>
        <taxon>Oestroidea</taxon>
        <taxon>Calliphoridae</taxon>
        <taxon>Luciliinae</taxon>
        <taxon>Lucilia</taxon>
    </lineage>
</organism>
<comment type="subcellular location">
    <subcellularLocation>
        <location evidence="4">Secreted</location>
    </subcellularLocation>
</comment>
<comment type="tissue specificity">
    <text evidence="2">Detected in the thoracic perisympathetic organs in larvae, and the dorsal ganglionic sheath in adults (at protein level).</text>
</comment>
<comment type="mass spectrometry"/>
<comment type="similarity">
    <text evidence="1">Belongs to the FARP (FMRFamide related peptide) family.</text>
</comment>
<feature type="peptide" id="PRO_0000371748" description="FMRFamide-1">
    <location>
        <begin position="1"/>
        <end position="9"/>
    </location>
</feature>
<feature type="modified residue" description="Phenylalanine amide" evidence="2">
    <location>
        <position position="9"/>
    </location>
</feature>
<protein>
    <recommendedName>
        <fullName>FMRFamide-1</fullName>
    </recommendedName>
    <alternativeName>
        <fullName evidence="3">LucFMRFamide-1</fullName>
    </alternativeName>
</protein>
<proteinExistence type="evidence at protein level"/>